<proteinExistence type="evidence at protein level"/>
<accession>Q5VU69</accession>
<accession>A1L4E3</accession>
<comment type="function">
    <text evidence="2">Microtubule inner protein (MIP) part of the dynein-decorated doublet microtubules (DMTs) in cilia axoneme, which is required for motile cilia beating.</text>
</comment>
<comment type="subunit">
    <text evidence="1">Microtubule inner protein component of sperm flagellar doublet microtubules.</text>
</comment>
<comment type="interaction">
    <interactant intactId="EBI-10247920">
        <id>Q5VU69</id>
    </interactant>
    <interactant intactId="EBI-744782">
        <id>Q9Y5B8</id>
        <label>NME7</label>
    </interactant>
    <organismsDiffer>false</organismsDiffer>
    <experiments>11</experiments>
</comment>
<comment type="interaction">
    <interactant intactId="EBI-10247920">
        <id>Q5VU69</id>
    </interactant>
    <interactant intactId="EBI-681645">
        <id>Q9H7Z7</id>
        <label>PTGES2</label>
    </interactant>
    <organismsDiffer>false</organismsDiffer>
    <experiments>3</experiments>
</comment>
<comment type="subcellular location">
    <subcellularLocation>
        <location evidence="2">Cytoplasm</location>
        <location evidence="2">Cytoskeleton</location>
        <location evidence="2">Cilium axoneme</location>
    </subcellularLocation>
    <subcellularLocation>
        <location evidence="1">Cytoplasm</location>
        <location evidence="1">Cytoskeleton</location>
        <location evidence="1">Flagellum axoneme</location>
    </subcellularLocation>
</comment>
<comment type="tissue specificity">
    <text evidence="2">Expressed in airway epithelial cells.</text>
</comment>
<feature type="chain" id="PRO_0000270966" description="Cilia- and flagella-associated protein 141">
    <location>
        <begin position="1"/>
        <end position="101"/>
    </location>
</feature>
<dbReference type="EMBL" id="AL590431">
    <property type="status" value="NOT_ANNOTATED_CDS"/>
    <property type="molecule type" value="Genomic_DNA"/>
</dbReference>
<dbReference type="EMBL" id="CH471121">
    <property type="protein sequence ID" value="EAW53228.1"/>
    <property type="molecule type" value="Genomic_DNA"/>
</dbReference>
<dbReference type="EMBL" id="BC127710">
    <property type="protein sequence ID" value="AAI27711.1"/>
    <property type="molecule type" value="mRNA"/>
</dbReference>
<dbReference type="EMBL" id="BC130509">
    <property type="protein sequence ID" value="AAI30510.1"/>
    <property type="molecule type" value="mRNA"/>
</dbReference>
<dbReference type="CCDS" id="CCDS30876.1"/>
<dbReference type="RefSeq" id="NP_001010979.1">
    <property type="nucleotide sequence ID" value="NM_001010979.3"/>
</dbReference>
<dbReference type="PDB" id="7UNG">
    <property type="method" value="EM"/>
    <property type="resolution" value="3.60 A"/>
    <property type="chains" value="A=1-101"/>
</dbReference>
<dbReference type="PDB" id="8J07">
    <property type="method" value="EM"/>
    <property type="resolution" value="4.10 A"/>
    <property type="chains" value="2I/2J=1-101"/>
</dbReference>
<dbReference type="PDBsum" id="7UNG"/>
<dbReference type="PDBsum" id="8J07"/>
<dbReference type="EMDB" id="EMD-26624"/>
<dbReference type="EMDB" id="EMD-35888"/>
<dbReference type="SMR" id="Q5VU69"/>
<dbReference type="BioGRID" id="132817">
    <property type="interactions" value="55"/>
</dbReference>
<dbReference type="FunCoup" id="Q5VU69">
    <property type="interactions" value="6"/>
</dbReference>
<dbReference type="IntAct" id="Q5VU69">
    <property type="interactions" value="54"/>
</dbReference>
<dbReference type="STRING" id="9606.ENSP00000357511"/>
<dbReference type="PhosphoSitePlus" id="Q5VU69"/>
<dbReference type="BioMuta" id="C1orf189"/>
<dbReference type="DMDM" id="74747059"/>
<dbReference type="MassIVE" id="Q5VU69"/>
<dbReference type="PaxDb" id="9606-ENSP00000357511"/>
<dbReference type="PeptideAtlas" id="Q5VU69"/>
<dbReference type="ProteomicsDB" id="65393"/>
<dbReference type="Antibodypedia" id="62988">
    <property type="antibodies" value="60 antibodies from 9 providers"/>
</dbReference>
<dbReference type="DNASU" id="388701"/>
<dbReference type="Ensembl" id="ENST00000368525.4">
    <property type="protein sequence ID" value="ENSP00000357511.3"/>
    <property type="gene ID" value="ENSG00000163263.7"/>
</dbReference>
<dbReference type="GeneID" id="388701"/>
<dbReference type="KEGG" id="hsa:388701"/>
<dbReference type="MANE-Select" id="ENST00000368525.4">
    <property type="protein sequence ID" value="ENSP00000357511.3"/>
    <property type="RefSeq nucleotide sequence ID" value="NM_001010979.3"/>
    <property type="RefSeq protein sequence ID" value="NP_001010979.1"/>
</dbReference>
<dbReference type="UCSC" id="uc001fee.3">
    <property type="organism name" value="human"/>
</dbReference>
<dbReference type="AGR" id="HGNC:32305"/>
<dbReference type="CTD" id="388701"/>
<dbReference type="GeneCards" id="CFAP141"/>
<dbReference type="HGNC" id="HGNC:32305">
    <property type="gene designation" value="CFAP141"/>
</dbReference>
<dbReference type="HPA" id="ENSG00000163263">
    <property type="expression patterns" value="Group enriched (fallopian tube, testis)"/>
</dbReference>
<dbReference type="neXtProt" id="NX_Q5VU69"/>
<dbReference type="VEuPathDB" id="HostDB:ENSG00000163263"/>
<dbReference type="eggNOG" id="ENOG502SF03">
    <property type="taxonomic scope" value="Eukaryota"/>
</dbReference>
<dbReference type="GeneTree" id="ENSGT00510000048901"/>
<dbReference type="HOGENOM" id="CLU_2290739_0_0_1"/>
<dbReference type="InParanoid" id="Q5VU69"/>
<dbReference type="OMA" id="WRNAHTD"/>
<dbReference type="OrthoDB" id="2122938at2759"/>
<dbReference type="PAN-GO" id="Q5VU69">
    <property type="GO annotations" value="0 GO annotations based on evolutionary models"/>
</dbReference>
<dbReference type="PhylomeDB" id="Q5VU69"/>
<dbReference type="TreeFam" id="TF341125"/>
<dbReference type="PathwayCommons" id="Q5VU69"/>
<dbReference type="SignaLink" id="Q5VU69"/>
<dbReference type="BioGRID-ORCS" id="388701">
    <property type="hits" value="9 hits in 1124 CRISPR screens"/>
</dbReference>
<dbReference type="GenomeRNAi" id="388701"/>
<dbReference type="Pharos" id="Q5VU69">
    <property type="development level" value="Tdark"/>
</dbReference>
<dbReference type="PRO" id="PR:Q5VU69"/>
<dbReference type="Proteomes" id="UP000005640">
    <property type="component" value="Chromosome 1"/>
</dbReference>
<dbReference type="RNAct" id="Q5VU69">
    <property type="molecule type" value="protein"/>
</dbReference>
<dbReference type="Bgee" id="ENSG00000163263">
    <property type="expression patterns" value="Expressed in right uterine tube and 87 other cell types or tissues"/>
</dbReference>
<dbReference type="GO" id="GO:0160111">
    <property type="term" value="C:axonemal A tubule inner sheath"/>
    <property type="evidence" value="ECO:0000250"/>
    <property type="project" value="UniProtKB"/>
</dbReference>
<dbReference type="GO" id="GO:0005879">
    <property type="term" value="C:axonemal microtubule"/>
    <property type="evidence" value="ECO:0000314"/>
    <property type="project" value="UniProtKB"/>
</dbReference>
<dbReference type="GO" id="GO:0036126">
    <property type="term" value="C:sperm flagellum"/>
    <property type="evidence" value="ECO:0000250"/>
    <property type="project" value="UniProtKB"/>
</dbReference>
<dbReference type="GO" id="GO:0030317">
    <property type="term" value="P:flagellated sperm motility"/>
    <property type="evidence" value="ECO:0000250"/>
    <property type="project" value="UniProtKB"/>
</dbReference>
<dbReference type="InterPro" id="IPR029375">
    <property type="entry name" value="CFAP141"/>
</dbReference>
<dbReference type="PANTHER" id="PTHR35818">
    <property type="entry name" value="C1ORF189"/>
    <property type="match status" value="1"/>
</dbReference>
<dbReference type="PANTHER" id="PTHR35818:SF1">
    <property type="entry name" value="CILIA- AND FLAGELLA-ASSOCIATED PROTEIN 141"/>
    <property type="match status" value="1"/>
</dbReference>
<dbReference type="Pfam" id="PF15104">
    <property type="entry name" value="CFAP141"/>
    <property type="match status" value="1"/>
</dbReference>
<sequence length="101" mass="12131">MSVEKMTKVEESFQKAMGLKKTVDRWRNSHTHCLWQMALGQRRNPYATLRMQDTMVQELALAKKQLLMVRQAALHQLFEKEHQQYQQELNQMGKAFYVERF</sequence>
<gene>
    <name evidence="3" type="primary">CFAP141</name>
    <name evidence="3" type="synonym">C1orf189</name>
</gene>
<protein>
    <recommendedName>
        <fullName evidence="3">Cilia- and flagella-associated protein 141</fullName>
    </recommendedName>
</protein>
<name>CP141_HUMAN</name>
<reference key="1">
    <citation type="journal article" date="2006" name="Nature">
        <title>The DNA sequence and biological annotation of human chromosome 1.</title>
        <authorList>
            <person name="Gregory S.G."/>
            <person name="Barlow K.F."/>
            <person name="McLay K.E."/>
            <person name="Kaul R."/>
            <person name="Swarbreck D."/>
            <person name="Dunham A."/>
            <person name="Scott C.E."/>
            <person name="Howe K.L."/>
            <person name="Woodfine K."/>
            <person name="Spencer C.C.A."/>
            <person name="Jones M.C."/>
            <person name="Gillson C."/>
            <person name="Searle S."/>
            <person name="Zhou Y."/>
            <person name="Kokocinski F."/>
            <person name="McDonald L."/>
            <person name="Evans R."/>
            <person name="Phillips K."/>
            <person name="Atkinson A."/>
            <person name="Cooper R."/>
            <person name="Jones C."/>
            <person name="Hall R.E."/>
            <person name="Andrews T.D."/>
            <person name="Lloyd C."/>
            <person name="Ainscough R."/>
            <person name="Almeida J.P."/>
            <person name="Ambrose K.D."/>
            <person name="Anderson F."/>
            <person name="Andrew R.W."/>
            <person name="Ashwell R.I.S."/>
            <person name="Aubin K."/>
            <person name="Babbage A.K."/>
            <person name="Bagguley C.L."/>
            <person name="Bailey J."/>
            <person name="Beasley H."/>
            <person name="Bethel G."/>
            <person name="Bird C.P."/>
            <person name="Bray-Allen S."/>
            <person name="Brown J.Y."/>
            <person name="Brown A.J."/>
            <person name="Buckley D."/>
            <person name="Burton J."/>
            <person name="Bye J."/>
            <person name="Carder C."/>
            <person name="Chapman J.C."/>
            <person name="Clark S.Y."/>
            <person name="Clarke G."/>
            <person name="Clee C."/>
            <person name="Cobley V."/>
            <person name="Collier R.E."/>
            <person name="Corby N."/>
            <person name="Coville G.J."/>
            <person name="Davies J."/>
            <person name="Deadman R."/>
            <person name="Dunn M."/>
            <person name="Earthrowl M."/>
            <person name="Ellington A.G."/>
            <person name="Errington H."/>
            <person name="Frankish A."/>
            <person name="Frankland J."/>
            <person name="French L."/>
            <person name="Garner P."/>
            <person name="Garnett J."/>
            <person name="Gay L."/>
            <person name="Ghori M.R.J."/>
            <person name="Gibson R."/>
            <person name="Gilby L.M."/>
            <person name="Gillett W."/>
            <person name="Glithero R.J."/>
            <person name="Grafham D.V."/>
            <person name="Griffiths C."/>
            <person name="Griffiths-Jones S."/>
            <person name="Grocock R."/>
            <person name="Hammond S."/>
            <person name="Harrison E.S.I."/>
            <person name="Hart E."/>
            <person name="Haugen E."/>
            <person name="Heath P.D."/>
            <person name="Holmes S."/>
            <person name="Holt K."/>
            <person name="Howden P.J."/>
            <person name="Hunt A.R."/>
            <person name="Hunt S.E."/>
            <person name="Hunter G."/>
            <person name="Isherwood J."/>
            <person name="James R."/>
            <person name="Johnson C."/>
            <person name="Johnson D."/>
            <person name="Joy A."/>
            <person name="Kay M."/>
            <person name="Kershaw J.K."/>
            <person name="Kibukawa M."/>
            <person name="Kimberley A.M."/>
            <person name="King A."/>
            <person name="Knights A.J."/>
            <person name="Lad H."/>
            <person name="Laird G."/>
            <person name="Lawlor S."/>
            <person name="Leongamornlert D.A."/>
            <person name="Lloyd D.M."/>
            <person name="Loveland J."/>
            <person name="Lovell J."/>
            <person name="Lush M.J."/>
            <person name="Lyne R."/>
            <person name="Martin S."/>
            <person name="Mashreghi-Mohammadi M."/>
            <person name="Matthews L."/>
            <person name="Matthews N.S.W."/>
            <person name="McLaren S."/>
            <person name="Milne S."/>
            <person name="Mistry S."/>
            <person name="Moore M.J.F."/>
            <person name="Nickerson T."/>
            <person name="O'Dell C.N."/>
            <person name="Oliver K."/>
            <person name="Palmeiri A."/>
            <person name="Palmer S.A."/>
            <person name="Parker A."/>
            <person name="Patel D."/>
            <person name="Pearce A.V."/>
            <person name="Peck A.I."/>
            <person name="Pelan S."/>
            <person name="Phelps K."/>
            <person name="Phillimore B.J."/>
            <person name="Plumb R."/>
            <person name="Rajan J."/>
            <person name="Raymond C."/>
            <person name="Rouse G."/>
            <person name="Saenphimmachak C."/>
            <person name="Sehra H.K."/>
            <person name="Sheridan E."/>
            <person name="Shownkeen R."/>
            <person name="Sims S."/>
            <person name="Skuce C.D."/>
            <person name="Smith M."/>
            <person name="Steward C."/>
            <person name="Subramanian S."/>
            <person name="Sycamore N."/>
            <person name="Tracey A."/>
            <person name="Tromans A."/>
            <person name="Van Helmond Z."/>
            <person name="Wall M."/>
            <person name="Wallis J.M."/>
            <person name="White S."/>
            <person name="Whitehead S.L."/>
            <person name="Wilkinson J.E."/>
            <person name="Willey D.L."/>
            <person name="Williams H."/>
            <person name="Wilming L."/>
            <person name="Wray P.W."/>
            <person name="Wu Z."/>
            <person name="Coulson A."/>
            <person name="Vaudin M."/>
            <person name="Sulston J.E."/>
            <person name="Durbin R.M."/>
            <person name="Hubbard T."/>
            <person name="Wooster R."/>
            <person name="Dunham I."/>
            <person name="Carter N.P."/>
            <person name="McVean G."/>
            <person name="Ross M.T."/>
            <person name="Harrow J."/>
            <person name="Olson M.V."/>
            <person name="Beck S."/>
            <person name="Rogers J."/>
            <person name="Bentley D.R."/>
        </authorList>
    </citation>
    <scope>NUCLEOTIDE SEQUENCE [LARGE SCALE GENOMIC DNA]</scope>
</reference>
<reference key="2">
    <citation type="submission" date="2005-09" db="EMBL/GenBank/DDBJ databases">
        <authorList>
            <person name="Mural R.J."/>
            <person name="Istrail S."/>
            <person name="Sutton G.G."/>
            <person name="Florea L."/>
            <person name="Halpern A.L."/>
            <person name="Mobarry C.M."/>
            <person name="Lippert R."/>
            <person name="Walenz B."/>
            <person name="Shatkay H."/>
            <person name="Dew I."/>
            <person name="Miller J.R."/>
            <person name="Flanigan M.J."/>
            <person name="Edwards N.J."/>
            <person name="Bolanos R."/>
            <person name="Fasulo D."/>
            <person name="Halldorsson B.V."/>
            <person name="Hannenhalli S."/>
            <person name="Turner R."/>
            <person name="Yooseph S."/>
            <person name="Lu F."/>
            <person name="Nusskern D.R."/>
            <person name="Shue B.C."/>
            <person name="Zheng X.H."/>
            <person name="Zhong F."/>
            <person name="Delcher A.L."/>
            <person name="Huson D.H."/>
            <person name="Kravitz S.A."/>
            <person name="Mouchard L."/>
            <person name="Reinert K."/>
            <person name="Remington K.A."/>
            <person name="Clark A.G."/>
            <person name="Waterman M.S."/>
            <person name="Eichler E.E."/>
            <person name="Adams M.D."/>
            <person name="Hunkapiller M.W."/>
            <person name="Myers E.W."/>
            <person name="Venter J.C."/>
        </authorList>
    </citation>
    <scope>NUCLEOTIDE SEQUENCE [LARGE SCALE GENOMIC DNA]</scope>
</reference>
<reference key="3">
    <citation type="journal article" date="2004" name="Genome Res.">
        <title>The status, quality, and expansion of the NIH full-length cDNA project: the Mammalian Gene Collection (MGC).</title>
        <authorList>
            <consortium name="The MGC Project Team"/>
        </authorList>
    </citation>
    <scope>NUCLEOTIDE SEQUENCE [LARGE SCALE MRNA]</scope>
    <source>
        <tissue>Testis</tissue>
    </source>
</reference>
<reference evidence="4" key="4">
    <citation type="journal article" date="2022" name="Proc. Natl. Acad. Sci. U.S.A.">
        <title>SPACA9 is a lumenal protein of human ciliary singlet and doublet microtubules.</title>
        <authorList>
            <person name="Gui M."/>
            <person name="Croft J.T."/>
            <person name="Zabeo D."/>
            <person name="Acharya V."/>
            <person name="Kollman J.M."/>
            <person name="Burgoyne T."/>
            <person name="Hoog J.L."/>
            <person name="Brown A."/>
        </authorList>
    </citation>
    <scope>STRUCTURE BY ELECTRON MICROSCOPY (3.60 ANGSTROMS)</scope>
    <scope>FUNCTION</scope>
    <scope>SUBCELLULAR LOCATION</scope>
    <scope>TISSUE SPECIFICITY</scope>
</reference>
<keyword id="KW-0002">3D-structure</keyword>
<keyword id="KW-0966">Cell projection</keyword>
<keyword id="KW-0969">Cilium</keyword>
<keyword id="KW-0963">Cytoplasm</keyword>
<keyword id="KW-0206">Cytoskeleton</keyword>
<keyword id="KW-0282">Flagellum</keyword>
<keyword id="KW-1267">Proteomics identification</keyword>
<keyword id="KW-1185">Reference proteome</keyword>
<evidence type="ECO:0000250" key="1">
    <source>
        <dbReference type="UniProtKB" id="Q9D9D9"/>
    </source>
</evidence>
<evidence type="ECO:0000269" key="2">
    <source>
    </source>
</evidence>
<evidence type="ECO:0000312" key="3">
    <source>
        <dbReference type="HGNC" id="HGNC:32305"/>
    </source>
</evidence>
<evidence type="ECO:0007744" key="4">
    <source>
        <dbReference type="PDB" id="7UNG"/>
    </source>
</evidence>
<organism>
    <name type="scientific">Homo sapiens</name>
    <name type="common">Human</name>
    <dbReference type="NCBI Taxonomy" id="9606"/>
    <lineage>
        <taxon>Eukaryota</taxon>
        <taxon>Metazoa</taxon>
        <taxon>Chordata</taxon>
        <taxon>Craniata</taxon>
        <taxon>Vertebrata</taxon>
        <taxon>Euteleostomi</taxon>
        <taxon>Mammalia</taxon>
        <taxon>Eutheria</taxon>
        <taxon>Euarchontoglires</taxon>
        <taxon>Primates</taxon>
        <taxon>Haplorrhini</taxon>
        <taxon>Catarrhini</taxon>
        <taxon>Hominidae</taxon>
        <taxon>Homo</taxon>
    </lineage>
</organism>